<evidence type="ECO:0000250" key="1">
    <source>
        <dbReference type="UniProtKB" id="Q07782"/>
    </source>
</evidence>
<evidence type="ECO:0000255" key="2"/>
<evidence type="ECO:0000269" key="3">
    <source>
    </source>
</evidence>
<evidence type="ECO:0000305" key="4"/>
<dbReference type="EMBL" id="AF260824">
    <property type="protein sequence ID" value="AAG60583.1"/>
    <property type="molecule type" value="mRNA"/>
</dbReference>
<dbReference type="EMBL" id="AK026413">
    <property type="protein sequence ID" value="BAB15477.1"/>
    <property type="molecule type" value="mRNA"/>
</dbReference>
<dbReference type="CCDS" id="CCDS5786.1"/>
<dbReference type="RefSeq" id="NP_001311329.1">
    <property type="nucleotide sequence ID" value="NM_001324400.1"/>
</dbReference>
<dbReference type="RefSeq" id="NP_071889.2">
    <property type="nucleotide sequence ID" value="NM_022444.3"/>
</dbReference>
<dbReference type="RefSeq" id="XP_054214828.1">
    <property type="nucleotide sequence ID" value="XM_054358853.1"/>
</dbReference>
<dbReference type="PDB" id="8W6H">
    <property type="method" value="EM"/>
    <property type="resolution" value="3.10 A"/>
    <property type="chains" value="A/B=1-595"/>
</dbReference>
<dbReference type="PDB" id="8W6N">
    <property type="method" value="EM"/>
    <property type="resolution" value="3.20 A"/>
    <property type="chains" value="A/B=1-595"/>
</dbReference>
<dbReference type="PDB" id="8W6O">
    <property type="method" value="EM"/>
    <property type="resolution" value="2.90 A"/>
    <property type="chains" value="A/B=1-595"/>
</dbReference>
<dbReference type="PDB" id="8W6T">
    <property type="method" value="EM"/>
    <property type="resolution" value="3.00 A"/>
    <property type="chains" value="A/B=1-595"/>
</dbReference>
<dbReference type="PDB" id="8Y5U">
    <property type="method" value="EM"/>
    <property type="resolution" value="3.04 A"/>
    <property type="chains" value="A/B=1-595"/>
</dbReference>
<dbReference type="PDB" id="8Y5W">
    <property type="method" value="EM"/>
    <property type="resolution" value="2.73 A"/>
    <property type="chains" value="A/B=1-595"/>
</dbReference>
<dbReference type="PDB" id="8Y5X">
    <property type="method" value="EM"/>
    <property type="resolution" value="3.25 A"/>
    <property type="chains" value="A/B=1-595"/>
</dbReference>
<dbReference type="PDB" id="8Y5Y">
    <property type="method" value="EM"/>
    <property type="resolution" value="3.30 A"/>
    <property type="chains" value="B/C=1-595"/>
</dbReference>
<dbReference type="PDB" id="8Y5Z">
    <property type="method" value="EM"/>
    <property type="resolution" value="3.35 A"/>
    <property type="chains" value="A/B=1-595"/>
</dbReference>
<dbReference type="PDBsum" id="8W6H"/>
<dbReference type="PDBsum" id="8W6N"/>
<dbReference type="PDBsum" id="8W6O"/>
<dbReference type="PDBsum" id="8W6T"/>
<dbReference type="PDBsum" id="8Y5U"/>
<dbReference type="PDBsum" id="8Y5W"/>
<dbReference type="PDBsum" id="8Y5X"/>
<dbReference type="PDBsum" id="8Y5Y"/>
<dbReference type="PDBsum" id="8Y5Z"/>
<dbReference type="EMDB" id="EMD-37323"/>
<dbReference type="EMDB" id="EMD-37329"/>
<dbReference type="EMDB" id="EMD-37330"/>
<dbReference type="EMDB" id="EMD-37332"/>
<dbReference type="EMDB" id="EMD-38953"/>
<dbReference type="EMDB" id="EMD-38954"/>
<dbReference type="EMDB" id="EMD-38955"/>
<dbReference type="EMDB" id="EMD-38959"/>
<dbReference type="EMDB" id="EMD-38960"/>
<dbReference type="SMR" id="Q9BZW2"/>
<dbReference type="BioGRID" id="112450">
    <property type="interactions" value="40"/>
</dbReference>
<dbReference type="FunCoup" id="Q9BZW2">
    <property type="interactions" value="205"/>
</dbReference>
<dbReference type="IntAct" id="Q9BZW2">
    <property type="interactions" value="1"/>
</dbReference>
<dbReference type="STRING" id="9606.ENSP00000194130"/>
<dbReference type="DrugBank" id="DB00139">
    <property type="generic name" value="Succinic acid"/>
</dbReference>
<dbReference type="TCDB" id="2.A.47.1.16">
    <property type="family name" value="the divalent anion:na(+) symporter (dass) family"/>
</dbReference>
<dbReference type="GlyCosmos" id="Q9BZW2">
    <property type="glycosylation" value="3 sites, No reported glycans"/>
</dbReference>
<dbReference type="GlyGen" id="Q9BZW2">
    <property type="glycosylation" value="3 sites"/>
</dbReference>
<dbReference type="PhosphoSitePlus" id="Q9BZW2"/>
<dbReference type="BioMuta" id="SLC13A1"/>
<dbReference type="DMDM" id="23396850"/>
<dbReference type="MassIVE" id="Q9BZW2"/>
<dbReference type="PaxDb" id="9606-ENSP00000194130"/>
<dbReference type="PeptideAtlas" id="Q9BZW2"/>
<dbReference type="Antibodypedia" id="62232">
    <property type="antibodies" value="27 antibodies from 12 providers"/>
</dbReference>
<dbReference type="DNASU" id="6561"/>
<dbReference type="Ensembl" id="ENST00000194130.7">
    <property type="protein sequence ID" value="ENSP00000194130.2"/>
    <property type="gene ID" value="ENSG00000081800.9"/>
</dbReference>
<dbReference type="GeneID" id="6561"/>
<dbReference type="KEGG" id="hsa:6561"/>
<dbReference type="MANE-Select" id="ENST00000194130.7">
    <property type="protein sequence ID" value="ENSP00000194130.2"/>
    <property type="RefSeq nucleotide sequence ID" value="NM_022444.4"/>
    <property type="RefSeq protein sequence ID" value="NP_071889.2"/>
</dbReference>
<dbReference type="UCSC" id="uc003vkm.4">
    <property type="organism name" value="human"/>
</dbReference>
<dbReference type="AGR" id="HGNC:10916"/>
<dbReference type="CTD" id="6561"/>
<dbReference type="DisGeNET" id="6561"/>
<dbReference type="GeneCards" id="SLC13A1"/>
<dbReference type="HGNC" id="HGNC:10916">
    <property type="gene designation" value="SLC13A1"/>
</dbReference>
<dbReference type="HPA" id="ENSG00000081800">
    <property type="expression patterns" value="Tissue enriched (kidney)"/>
</dbReference>
<dbReference type="MIM" id="606193">
    <property type="type" value="gene"/>
</dbReference>
<dbReference type="neXtProt" id="NX_Q9BZW2"/>
<dbReference type="OpenTargets" id="ENSG00000081800"/>
<dbReference type="PharmGKB" id="PA322"/>
<dbReference type="VEuPathDB" id="HostDB:ENSG00000081800"/>
<dbReference type="eggNOG" id="KOG1281">
    <property type="taxonomic scope" value="Eukaryota"/>
</dbReference>
<dbReference type="GeneTree" id="ENSGT01030000234550"/>
<dbReference type="HOGENOM" id="CLU_005170_9_1_1"/>
<dbReference type="InParanoid" id="Q9BZW2"/>
<dbReference type="OMA" id="THIMAHT"/>
<dbReference type="OrthoDB" id="6493944at2759"/>
<dbReference type="PAN-GO" id="Q9BZW2">
    <property type="GO annotations" value="4 GO annotations based on evolutionary models"/>
</dbReference>
<dbReference type="PhylomeDB" id="Q9BZW2"/>
<dbReference type="TreeFam" id="TF312913"/>
<dbReference type="PathwayCommons" id="Q9BZW2"/>
<dbReference type="Reactome" id="R-HSA-433137">
    <property type="pathway name" value="Sodium-coupled sulphate, di- and tri-carboxylate transporters"/>
</dbReference>
<dbReference type="BioGRID-ORCS" id="6561">
    <property type="hits" value="6 hits in 1143 CRISPR screens"/>
</dbReference>
<dbReference type="ChiTaRS" id="SLC13A1">
    <property type="organism name" value="human"/>
</dbReference>
<dbReference type="GenomeRNAi" id="6561"/>
<dbReference type="Pharos" id="Q9BZW2">
    <property type="development level" value="Tbio"/>
</dbReference>
<dbReference type="PRO" id="PR:Q9BZW2"/>
<dbReference type="Proteomes" id="UP000005640">
    <property type="component" value="Chromosome 7"/>
</dbReference>
<dbReference type="RNAct" id="Q9BZW2">
    <property type="molecule type" value="protein"/>
</dbReference>
<dbReference type="Bgee" id="ENSG00000081800">
    <property type="expression patterns" value="Expressed in nephron tubule and 20 other cell types or tissues"/>
</dbReference>
<dbReference type="ExpressionAtlas" id="Q9BZW2">
    <property type="expression patterns" value="baseline and differential"/>
</dbReference>
<dbReference type="GO" id="GO:0016324">
    <property type="term" value="C:apical plasma membrane"/>
    <property type="evidence" value="ECO:0007669"/>
    <property type="project" value="UniProtKB-SubCell"/>
</dbReference>
<dbReference type="GO" id="GO:0005886">
    <property type="term" value="C:plasma membrane"/>
    <property type="evidence" value="ECO:0000318"/>
    <property type="project" value="GO_Central"/>
</dbReference>
<dbReference type="GO" id="GO:0015373">
    <property type="term" value="F:monoatomic anion:sodium symporter activity"/>
    <property type="evidence" value="ECO:0007669"/>
    <property type="project" value="Ensembl"/>
</dbReference>
<dbReference type="GO" id="GO:0015382">
    <property type="term" value="F:sodium:sulfate symporter activity"/>
    <property type="evidence" value="ECO:0000314"/>
    <property type="project" value="UniProtKB"/>
</dbReference>
<dbReference type="GO" id="GO:0006814">
    <property type="term" value="P:sodium ion transport"/>
    <property type="evidence" value="ECO:0000318"/>
    <property type="project" value="GO_Central"/>
</dbReference>
<dbReference type="GO" id="GO:1902358">
    <property type="term" value="P:sulfate transmembrane transport"/>
    <property type="evidence" value="ECO:0000318"/>
    <property type="project" value="GO_Central"/>
</dbReference>
<dbReference type="CDD" id="cd01115">
    <property type="entry name" value="SLC13_permease"/>
    <property type="match status" value="1"/>
</dbReference>
<dbReference type="InterPro" id="IPR031312">
    <property type="entry name" value="Na/sul_symport_CS"/>
</dbReference>
<dbReference type="InterPro" id="IPR001898">
    <property type="entry name" value="SLC13A/DASS"/>
</dbReference>
<dbReference type="PANTHER" id="PTHR10283">
    <property type="entry name" value="SOLUTE CARRIER FAMILY 13 MEMBER"/>
    <property type="match status" value="1"/>
</dbReference>
<dbReference type="PANTHER" id="PTHR10283:SF65">
    <property type="entry name" value="SOLUTE CARRIER FAMILY 13 MEMBER 1"/>
    <property type="match status" value="1"/>
</dbReference>
<dbReference type="Pfam" id="PF00939">
    <property type="entry name" value="Na_sulph_symp"/>
    <property type="match status" value="1"/>
</dbReference>
<dbReference type="PROSITE" id="PS01271">
    <property type="entry name" value="NA_SULFATE"/>
    <property type="match status" value="1"/>
</dbReference>
<gene>
    <name type="primary">SLC13A1</name>
    <name type="synonym">NAS1</name>
    <name type="synonym">NASI1</name>
</gene>
<reference key="1">
    <citation type="journal article" date="2000" name="Genomics">
        <title>The human renal sodium sulfate cotransporter (SLC13A1; hNaSi-1) cDNA and gene: organization, chromosomal localization, and functional characterization.</title>
        <authorList>
            <person name="Lee A."/>
            <person name="Beck L."/>
            <person name="Markovich D."/>
        </authorList>
    </citation>
    <scope>NUCLEOTIDE SEQUENCE [MRNA]</scope>
    <scope>FUNCTION</scope>
    <scope>TRANSPORTER ACTIVITY</scope>
    <scope>TISSUE SPECIFICITY</scope>
    <scope>BIOPHYSICOCHEMICAL PROPERTIES</scope>
    <scope>ACTIVITY REGULATION</scope>
    <source>
        <tissue>Kidney</tissue>
    </source>
</reference>
<reference key="2">
    <citation type="journal article" date="2004" name="Nat. Genet.">
        <title>Complete sequencing and characterization of 21,243 full-length human cDNAs.</title>
        <authorList>
            <person name="Ota T."/>
            <person name="Suzuki Y."/>
            <person name="Nishikawa T."/>
            <person name="Otsuki T."/>
            <person name="Sugiyama T."/>
            <person name="Irie R."/>
            <person name="Wakamatsu A."/>
            <person name="Hayashi K."/>
            <person name="Sato H."/>
            <person name="Nagai K."/>
            <person name="Kimura K."/>
            <person name="Makita H."/>
            <person name="Sekine M."/>
            <person name="Obayashi M."/>
            <person name="Nishi T."/>
            <person name="Shibahara T."/>
            <person name="Tanaka T."/>
            <person name="Ishii S."/>
            <person name="Yamamoto J."/>
            <person name="Saito K."/>
            <person name="Kawai Y."/>
            <person name="Isono Y."/>
            <person name="Nakamura Y."/>
            <person name="Nagahari K."/>
            <person name="Murakami K."/>
            <person name="Yasuda T."/>
            <person name="Iwayanagi T."/>
            <person name="Wagatsuma M."/>
            <person name="Shiratori A."/>
            <person name="Sudo H."/>
            <person name="Hosoiri T."/>
            <person name="Kaku Y."/>
            <person name="Kodaira H."/>
            <person name="Kondo H."/>
            <person name="Sugawara M."/>
            <person name="Takahashi M."/>
            <person name="Kanda K."/>
            <person name="Yokoi T."/>
            <person name="Furuya T."/>
            <person name="Kikkawa E."/>
            <person name="Omura Y."/>
            <person name="Abe K."/>
            <person name="Kamihara K."/>
            <person name="Katsuta N."/>
            <person name="Sato K."/>
            <person name="Tanikawa M."/>
            <person name="Yamazaki M."/>
            <person name="Ninomiya K."/>
            <person name="Ishibashi T."/>
            <person name="Yamashita H."/>
            <person name="Murakawa K."/>
            <person name="Fujimori K."/>
            <person name="Tanai H."/>
            <person name="Kimata M."/>
            <person name="Watanabe M."/>
            <person name="Hiraoka S."/>
            <person name="Chiba Y."/>
            <person name="Ishida S."/>
            <person name="Ono Y."/>
            <person name="Takiguchi S."/>
            <person name="Watanabe S."/>
            <person name="Yosida M."/>
            <person name="Hotuta T."/>
            <person name="Kusano J."/>
            <person name="Kanehori K."/>
            <person name="Takahashi-Fujii A."/>
            <person name="Hara H."/>
            <person name="Tanase T.-O."/>
            <person name="Nomura Y."/>
            <person name="Togiya S."/>
            <person name="Komai F."/>
            <person name="Hara R."/>
            <person name="Takeuchi K."/>
            <person name="Arita M."/>
            <person name="Imose N."/>
            <person name="Musashino K."/>
            <person name="Yuuki H."/>
            <person name="Oshima A."/>
            <person name="Sasaki N."/>
            <person name="Aotsuka S."/>
            <person name="Yoshikawa Y."/>
            <person name="Matsunawa H."/>
            <person name="Ichihara T."/>
            <person name="Shiohata N."/>
            <person name="Sano S."/>
            <person name="Moriya S."/>
            <person name="Momiyama H."/>
            <person name="Satoh N."/>
            <person name="Takami S."/>
            <person name="Terashima Y."/>
            <person name="Suzuki O."/>
            <person name="Nakagawa S."/>
            <person name="Senoh A."/>
            <person name="Mizoguchi H."/>
            <person name="Goto Y."/>
            <person name="Shimizu F."/>
            <person name="Wakebe H."/>
            <person name="Hishigaki H."/>
            <person name="Watanabe T."/>
            <person name="Sugiyama A."/>
            <person name="Takemoto M."/>
            <person name="Kawakami B."/>
            <person name="Yamazaki M."/>
            <person name="Watanabe K."/>
            <person name="Kumagai A."/>
            <person name="Itakura S."/>
            <person name="Fukuzumi Y."/>
            <person name="Fujimori Y."/>
            <person name="Komiyama M."/>
            <person name="Tashiro H."/>
            <person name="Tanigami A."/>
            <person name="Fujiwara T."/>
            <person name="Ono T."/>
            <person name="Yamada K."/>
            <person name="Fujii Y."/>
            <person name="Ozaki K."/>
            <person name="Hirao M."/>
            <person name="Ohmori Y."/>
            <person name="Kawabata A."/>
            <person name="Hikiji T."/>
            <person name="Kobatake N."/>
            <person name="Inagaki H."/>
            <person name="Ikema Y."/>
            <person name="Okamoto S."/>
            <person name="Okitani R."/>
            <person name="Kawakami T."/>
            <person name="Noguchi S."/>
            <person name="Itoh T."/>
            <person name="Shigeta K."/>
            <person name="Senba T."/>
            <person name="Matsumura K."/>
            <person name="Nakajima Y."/>
            <person name="Mizuno T."/>
            <person name="Morinaga M."/>
            <person name="Sasaki M."/>
            <person name="Togashi T."/>
            <person name="Oyama M."/>
            <person name="Hata H."/>
            <person name="Watanabe M."/>
            <person name="Komatsu T."/>
            <person name="Mizushima-Sugano J."/>
            <person name="Satoh T."/>
            <person name="Shirai Y."/>
            <person name="Takahashi Y."/>
            <person name="Nakagawa K."/>
            <person name="Okumura K."/>
            <person name="Nagase T."/>
            <person name="Nomura N."/>
            <person name="Kikuchi H."/>
            <person name="Masuho Y."/>
            <person name="Yamashita R."/>
            <person name="Nakai K."/>
            <person name="Yada T."/>
            <person name="Nakamura Y."/>
            <person name="Ohara O."/>
            <person name="Isogai T."/>
            <person name="Sugano S."/>
        </authorList>
    </citation>
    <scope>NUCLEOTIDE SEQUENCE [LARGE SCALE MRNA]</scope>
    <source>
        <tissue>Ileal mucosa</tissue>
    </source>
</reference>
<accession>Q9BZW2</accession>
<accession>Q9H5Z0</accession>
<feature type="chain" id="PRO_0000172485" description="Solute carrier family 13 member 1">
    <location>
        <begin position="1"/>
        <end position="595"/>
    </location>
</feature>
<feature type="transmembrane region" description="Helical" evidence="2">
    <location>
        <begin position="13"/>
        <end position="33"/>
    </location>
</feature>
<feature type="transmembrane region" description="Helical" evidence="2">
    <location>
        <begin position="41"/>
        <end position="61"/>
    </location>
</feature>
<feature type="transmembrane region" description="Helical" evidence="2">
    <location>
        <begin position="77"/>
        <end position="97"/>
    </location>
</feature>
<feature type="transmembrane region" description="Helical" evidence="2">
    <location>
        <begin position="108"/>
        <end position="128"/>
    </location>
</feature>
<feature type="transmembrane region" description="Helical" evidence="2">
    <location>
        <begin position="131"/>
        <end position="151"/>
    </location>
</feature>
<feature type="transmembrane region" description="Helical" evidence="2">
    <location>
        <begin position="239"/>
        <end position="259"/>
    </location>
</feature>
<feature type="transmembrane region" description="Helical" evidence="2">
    <location>
        <begin position="290"/>
        <end position="310"/>
    </location>
</feature>
<feature type="transmembrane region" description="Helical" evidence="2">
    <location>
        <begin position="348"/>
        <end position="368"/>
    </location>
</feature>
<feature type="transmembrane region" description="Helical" evidence="2">
    <location>
        <begin position="381"/>
        <end position="401"/>
    </location>
</feature>
<feature type="transmembrane region" description="Helical" evidence="2">
    <location>
        <begin position="464"/>
        <end position="484"/>
    </location>
</feature>
<feature type="transmembrane region" description="Helical" evidence="2">
    <location>
        <begin position="491"/>
        <end position="511"/>
    </location>
</feature>
<feature type="transmembrane region" description="Helical" evidence="2">
    <location>
        <begin position="512"/>
        <end position="532"/>
    </location>
</feature>
<feature type="transmembrane region" description="Helical" evidence="2">
    <location>
        <begin position="554"/>
        <end position="574"/>
    </location>
</feature>
<feature type="glycosylation site" description="N-linked (GlcNAc...) asparagine" evidence="2">
    <location>
        <position position="174"/>
    </location>
</feature>
<feature type="glycosylation site" description="N-linked (GlcNAc...) asparagine" evidence="2">
    <location>
        <position position="207"/>
    </location>
</feature>
<feature type="glycosylation site" description="N-linked (GlcNAc...) asparagine" evidence="2">
    <location>
        <position position="591"/>
    </location>
</feature>
<feature type="sequence variant" id="VAR_029247" description="In dbSNP:rs28364181.">
    <original>F</original>
    <variation>L</variation>
    <location>
        <position position="42"/>
    </location>
</feature>
<feature type="sequence variant" id="VAR_029248" description="In dbSNP:rs28364177.">
    <original>V</original>
    <variation>I</variation>
    <location>
        <position position="44"/>
    </location>
</feature>
<feature type="sequence variant" id="VAR_029249" description="In dbSNP:rs28364196.">
    <original>Q</original>
    <variation>E</variation>
    <location>
        <position position="157"/>
    </location>
</feature>
<feature type="sequence variant" id="VAR_022018" description="In dbSNP:rs2140516.">
    <original>N</original>
    <variation>S</variation>
    <location>
        <position position="174"/>
    </location>
</feature>
<feature type="sequence variant" id="VAR_029250" description="In dbSNP:rs28364231.">
    <original>Y</original>
    <variation>C</variation>
    <location>
        <position position="205"/>
    </location>
</feature>
<feature type="sequence variant" id="VAR_059804" description="In dbSNP:rs10231144.">
    <original>T</original>
    <variation>M</variation>
    <location>
        <position position="240"/>
    </location>
</feature>
<feature type="sequence variant" id="VAR_029251" description="In dbSNP:rs28364200.">
    <original>R</original>
    <variation>H</variation>
    <location>
        <position position="277"/>
    </location>
</feature>
<feature type="sequence variant" id="VAR_029252" description="In dbSNP:rs28364201.">
    <original>V</original>
    <variation>A</variation>
    <location>
        <position position="332"/>
    </location>
</feature>
<feature type="sequence variant" id="VAR_029253" description="In dbSNP:rs28364210.">
    <original>I</original>
    <variation>T</variation>
    <location>
        <position position="392"/>
    </location>
</feature>
<feature type="sequence conflict" description="In Ref. 2; BAB15477." evidence="4" ref="2">
    <original>V</original>
    <variation>A</variation>
    <location>
        <position position="481"/>
    </location>
</feature>
<comment type="function">
    <text evidence="1 3">Sodium:sulfate symporter that mediates sulfate reabsorption in the kidney and small intestine (PubMed:11161786). Can also mediate the transport of selenate and thiosulfate (By similarity).</text>
</comment>
<comment type="catalytic activity">
    <reaction evidence="3">
        <text>sulfate(out) + 3 Na(+)(out) = sulfate(in) + 3 Na(+)(in)</text>
        <dbReference type="Rhea" id="RHEA:71951"/>
        <dbReference type="ChEBI" id="CHEBI:16189"/>
        <dbReference type="ChEBI" id="CHEBI:29101"/>
    </reaction>
</comment>
<comment type="catalytic activity">
    <reaction evidence="1">
        <text>selenate(out) + 3 Na(+)(out) = selenate(in) + 3 Na(+)(in)</text>
        <dbReference type="Rhea" id="RHEA:72079"/>
        <dbReference type="ChEBI" id="CHEBI:15075"/>
        <dbReference type="ChEBI" id="CHEBI:29101"/>
    </reaction>
</comment>
<comment type="catalytic activity">
    <reaction evidence="1">
        <text>thiosulfate(out) + 3 Na(+)(out) = thiosulfate(in) + 3 Na(+)(in)</text>
        <dbReference type="Rhea" id="RHEA:72323"/>
        <dbReference type="ChEBI" id="CHEBI:29101"/>
        <dbReference type="ChEBI" id="CHEBI:33542"/>
    </reaction>
</comment>
<comment type="activity regulation">
    <text evidence="3">Inhibited by thiosulfate, selenate, molybdate, tungstate, citrate and succinate.</text>
</comment>
<comment type="biophysicochemical properties">
    <kinetics>
        <KM evidence="3">0.31 mM for sulfate</KM>
        <KM evidence="3">23.6 mM for sodium</KM>
    </kinetics>
</comment>
<comment type="subcellular location">
    <subcellularLocation>
        <location evidence="1">Apical cell membrane</location>
        <topology evidence="2">Multi-pass membrane protein</topology>
    </subcellularLocation>
</comment>
<comment type="tissue specificity">
    <text evidence="3">Highly expressed in kidney; not detectable in the other tissues tested.</text>
</comment>
<comment type="similarity">
    <text evidence="4">Belongs to the SLC13A/DASS transporter (TC 2.A.47) family. NADC subfamily.</text>
</comment>
<name>S13A1_HUMAN</name>
<sequence>MKFFSYILVYRRFLFVVFTVLVLLPLPIVLHTKEAECAYTLFVVATFWLTEALPLSVTALLPSLMLPMFGIMPSKKVASAYFKDFHLLLIGVICLATSIEKWNLHKRIALKMVMMVGVNPAWLTLGFMSSTAFLSMWLSNTSTAAMVMPIAEAVVQQIINAEAEVEATQMTYFNGSTNHGLEIDESVNGHEINERKEKTKPVPGYNNDTGKISSKVELEKNSGMRTKYRTKKGHVTRKLTCLCIAYSSTIGGLTTITGTSTNLIFAEYFNTRYPDCRCLNFGSWFTFSFPAALIILLLSWIWLQWLFLGFNFKEMFKCGKTKTVQQKACAEVIKQEYQKLGPIRYQEIVTLVLFIIMALLWFSRDPGFVPGWSALFSEYPGFATDSTVALLIGLLFFLIPAKTLTKTTPTGEIVAFDYSPLITWKEFQSFMPWDIAILVGGGFALADGCEESGLSKWIGNKLSPLGSLPAWLIILISSLMVTSLTEVASNPATITLFLPILSPLAEAIHVNPLYILIPSTLCTSFAFLLPVANPPNAIVFSYGHLKVIDMVKAGLGVNIVGVAVVMLGICTWIVPMFDLYTYPSWAPAMSNETMP</sequence>
<protein>
    <recommendedName>
        <fullName>Solute carrier family 13 member 1</fullName>
    </recommendedName>
    <alternativeName>
        <fullName>Renal sodium/sulfate cotransporter</fullName>
        <shortName>Na(+)/sulfate cotransporter</shortName>
        <shortName>hNaSi-1</shortName>
    </alternativeName>
</protein>
<organism>
    <name type="scientific">Homo sapiens</name>
    <name type="common">Human</name>
    <dbReference type="NCBI Taxonomy" id="9606"/>
    <lineage>
        <taxon>Eukaryota</taxon>
        <taxon>Metazoa</taxon>
        <taxon>Chordata</taxon>
        <taxon>Craniata</taxon>
        <taxon>Vertebrata</taxon>
        <taxon>Euteleostomi</taxon>
        <taxon>Mammalia</taxon>
        <taxon>Eutheria</taxon>
        <taxon>Euarchontoglires</taxon>
        <taxon>Primates</taxon>
        <taxon>Haplorrhini</taxon>
        <taxon>Catarrhini</taxon>
        <taxon>Hominidae</taxon>
        <taxon>Homo</taxon>
    </lineage>
</organism>
<keyword id="KW-0002">3D-structure</keyword>
<keyword id="KW-1003">Cell membrane</keyword>
<keyword id="KW-0325">Glycoprotein</keyword>
<keyword id="KW-0406">Ion transport</keyword>
<keyword id="KW-0472">Membrane</keyword>
<keyword id="KW-1267">Proteomics identification</keyword>
<keyword id="KW-1185">Reference proteome</keyword>
<keyword id="KW-0915">Sodium</keyword>
<keyword id="KW-0739">Sodium transport</keyword>
<keyword id="KW-0764">Sulfate transport</keyword>
<keyword id="KW-0769">Symport</keyword>
<keyword id="KW-0812">Transmembrane</keyword>
<keyword id="KW-1133">Transmembrane helix</keyword>
<keyword id="KW-0813">Transport</keyword>
<proteinExistence type="evidence at protein level"/>